<proteinExistence type="inferred from homology"/>
<sequence>MAVEKFETALKKLEDVVKKLEGGELSLEESLKAFEEGVKFSAFCSKKLNEAERRVETLVKQRDGSFVTKPFEEEE</sequence>
<evidence type="ECO:0000255" key="1">
    <source>
        <dbReference type="HAMAP-Rule" id="MF_00337"/>
    </source>
</evidence>
<reference key="1">
    <citation type="submission" date="2008-07" db="EMBL/GenBank/DDBJ databases">
        <title>Complete sequence of Geobacter bemidjiensis BEM.</title>
        <authorList>
            <consortium name="US DOE Joint Genome Institute"/>
            <person name="Lucas S."/>
            <person name="Copeland A."/>
            <person name="Lapidus A."/>
            <person name="Glavina del Rio T."/>
            <person name="Dalin E."/>
            <person name="Tice H."/>
            <person name="Bruce D."/>
            <person name="Goodwin L."/>
            <person name="Pitluck S."/>
            <person name="Kiss H."/>
            <person name="Brettin T."/>
            <person name="Detter J.C."/>
            <person name="Han C."/>
            <person name="Kuske C.R."/>
            <person name="Schmutz J."/>
            <person name="Larimer F."/>
            <person name="Land M."/>
            <person name="Hauser L."/>
            <person name="Kyrpides N."/>
            <person name="Lykidis A."/>
            <person name="Lovley D."/>
            <person name="Richardson P."/>
        </authorList>
    </citation>
    <scope>NUCLEOTIDE SEQUENCE [LARGE SCALE GENOMIC DNA]</scope>
    <source>
        <strain>ATCC BAA-1014 / DSM 16622 / JCM 12645 / Bem</strain>
    </source>
</reference>
<gene>
    <name evidence="1" type="primary">xseB</name>
    <name type="ordered locus">Gbem_1256</name>
</gene>
<feature type="chain" id="PRO_1000119930" description="Exodeoxyribonuclease 7 small subunit">
    <location>
        <begin position="1"/>
        <end position="75"/>
    </location>
</feature>
<accession>B5EI11</accession>
<organism>
    <name type="scientific">Citrifermentans bemidjiense (strain ATCC BAA-1014 / DSM 16622 / JCM 12645 / Bem)</name>
    <name type="common">Geobacter bemidjiensis</name>
    <dbReference type="NCBI Taxonomy" id="404380"/>
    <lineage>
        <taxon>Bacteria</taxon>
        <taxon>Pseudomonadati</taxon>
        <taxon>Thermodesulfobacteriota</taxon>
        <taxon>Desulfuromonadia</taxon>
        <taxon>Geobacterales</taxon>
        <taxon>Geobacteraceae</taxon>
        <taxon>Citrifermentans</taxon>
    </lineage>
</organism>
<name>EX7S_CITBB</name>
<keyword id="KW-0963">Cytoplasm</keyword>
<keyword id="KW-0269">Exonuclease</keyword>
<keyword id="KW-0378">Hydrolase</keyword>
<keyword id="KW-0540">Nuclease</keyword>
<keyword id="KW-1185">Reference proteome</keyword>
<dbReference type="EC" id="3.1.11.6" evidence="1"/>
<dbReference type="EMBL" id="CP001124">
    <property type="protein sequence ID" value="ACH38275.1"/>
    <property type="molecule type" value="Genomic_DNA"/>
</dbReference>
<dbReference type="RefSeq" id="WP_012529687.1">
    <property type="nucleotide sequence ID" value="NC_011146.1"/>
</dbReference>
<dbReference type="SMR" id="B5EI11"/>
<dbReference type="STRING" id="404380.Gbem_1256"/>
<dbReference type="KEGG" id="gbm:Gbem_1256"/>
<dbReference type="eggNOG" id="COG1722">
    <property type="taxonomic scope" value="Bacteria"/>
</dbReference>
<dbReference type="HOGENOM" id="CLU_145918_3_3_7"/>
<dbReference type="OrthoDB" id="5523157at2"/>
<dbReference type="Proteomes" id="UP000008825">
    <property type="component" value="Chromosome"/>
</dbReference>
<dbReference type="GO" id="GO:0005829">
    <property type="term" value="C:cytosol"/>
    <property type="evidence" value="ECO:0007669"/>
    <property type="project" value="TreeGrafter"/>
</dbReference>
<dbReference type="GO" id="GO:0009318">
    <property type="term" value="C:exodeoxyribonuclease VII complex"/>
    <property type="evidence" value="ECO:0007669"/>
    <property type="project" value="InterPro"/>
</dbReference>
<dbReference type="GO" id="GO:0008855">
    <property type="term" value="F:exodeoxyribonuclease VII activity"/>
    <property type="evidence" value="ECO:0007669"/>
    <property type="project" value="UniProtKB-UniRule"/>
</dbReference>
<dbReference type="GO" id="GO:0006308">
    <property type="term" value="P:DNA catabolic process"/>
    <property type="evidence" value="ECO:0007669"/>
    <property type="project" value="UniProtKB-UniRule"/>
</dbReference>
<dbReference type="Gene3D" id="1.10.287.1040">
    <property type="entry name" value="Exonuclease VII, small subunit"/>
    <property type="match status" value="1"/>
</dbReference>
<dbReference type="HAMAP" id="MF_00337">
    <property type="entry name" value="Exonuc_7_S"/>
    <property type="match status" value="1"/>
</dbReference>
<dbReference type="InterPro" id="IPR003761">
    <property type="entry name" value="Exonuc_VII_S"/>
</dbReference>
<dbReference type="InterPro" id="IPR037004">
    <property type="entry name" value="Exonuc_VII_ssu_sf"/>
</dbReference>
<dbReference type="NCBIfam" id="NF002140">
    <property type="entry name" value="PRK00977.1-4"/>
    <property type="match status" value="1"/>
</dbReference>
<dbReference type="NCBIfam" id="NF010669">
    <property type="entry name" value="PRK14066.1"/>
    <property type="match status" value="1"/>
</dbReference>
<dbReference type="NCBIfam" id="TIGR01280">
    <property type="entry name" value="xseB"/>
    <property type="match status" value="1"/>
</dbReference>
<dbReference type="PANTHER" id="PTHR34137">
    <property type="entry name" value="EXODEOXYRIBONUCLEASE 7 SMALL SUBUNIT"/>
    <property type="match status" value="1"/>
</dbReference>
<dbReference type="PANTHER" id="PTHR34137:SF1">
    <property type="entry name" value="EXODEOXYRIBONUCLEASE 7 SMALL SUBUNIT"/>
    <property type="match status" value="1"/>
</dbReference>
<dbReference type="Pfam" id="PF02609">
    <property type="entry name" value="Exonuc_VII_S"/>
    <property type="match status" value="1"/>
</dbReference>
<dbReference type="PIRSF" id="PIRSF006488">
    <property type="entry name" value="Exonuc_VII_S"/>
    <property type="match status" value="1"/>
</dbReference>
<dbReference type="SUPFAM" id="SSF116842">
    <property type="entry name" value="XseB-like"/>
    <property type="match status" value="1"/>
</dbReference>
<protein>
    <recommendedName>
        <fullName evidence="1">Exodeoxyribonuclease 7 small subunit</fullName>
        <ecNumber evidence="1">3.1.11.6</ecNumber>
    </recommendedName>
    <alternativeName>
        <fullName evidence="1">Exodeoxyribonuclease VII small subunit</fullName>
        <shortName evidence="1">Exonuclease VII small subunit</shortName>
    </alternativeName>
</protein>
<comment type="function">
    <text evidence="1">Bidirectionally degrades single-stranded DNA into large acid-insoluble oligonucleotides, which are then degraded further into small acid-soluble oligonucleotides.</text>
</comment>
<comment type="catalytic activity">
    <reaction evidence="1">
        <text>Exonucleolytic cleavage in either 5'- to 3'- or 3'- to 5'-direction to yield nucleoside 5'-phosphates.</text>
        <dbReference type="EC" id="3.1.11.6"/>
    </reaction>
</comment>
<comment type="subunit">
    <text evidence="1">Heterooligomer composed of large and small subunits.</text>
</comment>
<comment type="subcellular location">
    <subcellularLocation>
        <location evidence="1">Cytoplasm</location>
    </subcellularLocation>
</comment>
<comment type="similarity">
    <text evidence="1">Belongs to the XseB family.</text>
</comment>